<dbReference type="EMBL" id="X00724">
    <property type="protein sequence ID" value="CAA25310.1"/>
    <property type="molecule type" value="Genomic_DNA"/>
</dbReference>
<dbReference type="EMBL" id="X00725">
    <property type="protein sequence ID" value="CAA25312.1"/>
    <property type="molecule type" value="Genomic_DNA"/>
</dbReference>
<dbReference type="EMBL" id="Z35879">
    <property type="protein sequence ID" value="CAA84948.1"/>
    <property type="molecule type" value="Genomic_DNA"/>
</dbReference>
<dbReference type="EMBL" id="Z71306">
    <property type="protein sequence ID" value="CAA95893.1"/>
    <property type="molecule type" value="Genomic_DNA"/>
</dbReference>
<dbReference type="EMBL" id="Z71307">
    <property type="protein sequence ID" value="CAA95894.1"/>
    <property type="molecule type" value="Genomic_DNA"/>
</dbReference>
<dbReference type="EMBL" id="AY558343">
    <property type="protein sequence ID" value="AAS56669.1"/>
    <property type="molecule type" value="Genomic_DNA"/>
</dbReference>
<dbReference type="EMBL" id="AY692987">
    <property type="protein sequence ID" value="AAT93006.1"/>
    <property type="molecule type" value="Genomic_DNA"/>
</dbReference>
<dbReference type="EMBL" id="AY554000">
    <property type="protein sequence ID" value="AAS64341.1"/>
    <property type="molecule type" value="Genomic_DNA"/>
</dbReference>
<dbReference type="EMBL" id="AY554001">
    <property type="protein sequence ID" value="AAS64342.1"/>
    <property type="molecule type" value="Genomic_DNA"/>
</dbReference>
<dbReference type="EMBL" id="AY554002">
    <property type="protein sequence ID" value="AAS64343.1"/>
    <property type="molecule type" value="Genomic_DNA"/>
</dbReference>
<dbReference type="EMBL" id="AY554003">
    <property type="protein sequence ID" value="AAS64344.1"/>
    <property type="molecule type" value="Genomic_DNA"/>
</dbReference>
<dbReference type="EMBL" id="AY554004">
    <property type="protein sequence ID" value="AAS64345.1"/>
    <property type="molecule type" value="Genomic_DNA"/>
</dbReference>
<dbReference type="EMBL" id="AY554005">
    <property type="protein sequence ID" value="AAS64346.1"/>
    <property type="molecule type" value="Genomic_DNA"/>
</dbReference>
<dbReference type="EMBL" id="AY554006">
    <property type="protein sequence ID" value="AAS64347.1"/>
    <property type="molecule type" value="Genomic_DNA"/>
</dbReference>
<dbReference type="EMBL" id="AY554007">
    <property type="protein sequence ID" value="AAS64348.1"/>
    <property type="molecule type" value="Genomic_DNA"/>
</dbReference>
<dbReference type="EMBL" id="AY554008">
    <property type="protein sequence ID" value="AAS64349.1"/>
    <property type="molecule type" value="Genomic_DNA"/>
</dbReference>
<dbReference type="EMBL" id="BK006936">
    <property type="protein sequence ID" value="DAA07131.1"/>
    <property type="molecule type" value="Genomic_DNA"/>
</dbReference>
<dbReference type="EMBL" id="BK006947">
    <property type="protein sequence ID" value="DAA10514.1"/>
    <property type="molecule type" value="Genomic_DNA"/>
</dbReference>
<dbReference type="PIR" id="S45265">
    <property type="entry name" value="HSBY3"/>
</dbReference>
<dbReference type="RefSeq" id="NP_009564.1">
    <property type="nucleotide sequence ID" value="NM_001178358.1"/>
</dbReference>
<dbReference type="RefSeq" id="NP_014367.1">
    <property type="nucleotide sequence ID" value="NM_001182870.1"/>
</dbReference>
<dbReference type="PDB" id="1ID3">
    <property type="method" value="X-ray"/>
    <property type="resolution" value="3.10 A"/>
    <property type="chains" value="A/E=2-136"/>
</dbReference>
<dbReference type="PDB" id="1M1D">
    <property type="method" value="X-ray"/>
    <property type="resolution" value="2.20 A"/>
    <property type="chains" value="B/D=2-21"/>
</dbReference>
<dbReference type="PDB" id="1PEG">
    <property type="method" value="X-ray"/>
    <property type="resolution" value="2.59 A"/>
    <property type="chains" value="P/Q=2-16"/>
</dbReference>
<dbReference type="PDB" id="1PU9">
    <property type="method" value="X-ray"/>
    <property type="resolution" value="2.30 A"/>
    <property type="chains" value="B=6-24"/>
</dbReference>
<dbReference type="PDB" id="1PUA">
    <property type="method" value="X-ray"/>
    <property type="resolution" value="2.30 A"/>
    <property type="chains" value="B=6-24"/>
</dbReference>
<dbReference type="PDB" id="1QSN">
    <property type="method" value="X-ray"/>
    <property type="resolution" value="2.20 A"/>
    <property type="chains" value="B=10-20"/>
</dbReference>
<dbReference type="PDB" id="2CNX">
    <property type="method" value="X-ray"/>
    <property type="resolution" value="2.10 A"/>
    <property type="chains" value="P=2-6"/>
</dbReference>
<dbReference type="PDB" id="2H2G">
    <property type="method" value="X-ray"/>
    <property type="resolution" value="1.63 A"/>
    <property type="chains" value="B=114-124"/>
</dbReference>
<dbReference type="PDB" id="2IDC">
    <property type="method" value="X-ray"/>
    <property type="resolution" value="2.20 A"/>
    <property type="chains" value="A=119-135"/>
</dbReference>
<dbReference type="PDB" id="2JMJ">
    <property type="method" value="NMR"/>
    <property type="chains" value="P=2-10"/>
</dbReference>
<dbReference type="PDB" id="2RNW">
    <property type="method" value="NMR"/>
    <property type="chains" value="B=2-16"/>
</dbReference>
<dbReference type="PDB" id="2RNX">
    <property type="method" value="NMR"/>
    <property type="chains" value="B=32-43"/>
</dbReference>
<dbReference type="PDB" id="2RSN">
    <property type="method" value="NMR"/>
    <property type="chains" value="B=2-18"/>
</dbReference>
<dbReference type="PDB" id="3MP1">
    <property type="method" value="X-ray"/>
    <property type="resolution" value="2.60 A"/>
    <property type="chains" value="P=2-6"/>
</dbReference>
<dbReference type="PDB" id="3MP6">
    <property type="method" value="X-ray"/>
    <property type="resolution" value="1.48 A"/>
    <property type="chains" value="P=2-5"/>
</dbReference>
<dbReference type="PDB" id="3Q33">
    <property type="method" value="X-ray"/>
    <property type="resolution" value="2.80 A"/>
    <property type="chains" value="D=2-15"/>
</dbReference>
<dbReference type="PDB" id="4JJN">
    <property type="method" value="X-ray"/>
    <property type="resolution" value="3.09 A"/>
    <property type="chains" value="A/E=2-136"/>
</dbReference>
<dbReference type="PDB" id="4KUD">
    <property type="method" value="X-ray"/>
    <property type="resolution" value="3.20 A"/>
    <property type="chains" value="A/E=1-136"/>
</dbReference>
<dbReference type="PDB" id="4PSX">
    <property type="method" value="X-ray"/>
    <property type="resolution" value="2.51 A"/>
    <property type="chains" value="P/Y=2-16"/>
</dbReference>
<dbReference type="PDB" id="5D7E">
    <property type="method" value="X-ray"/>
    <property type="resolution" value="1.90 A"/>
    <property type="chains" value="C=6-12"/>
</dbReference>
<dbReference type="PDB" id="5IOK">
    <property type="method" value="X-ray"/>
    <property type="resolution" value="2.22 A"/>
    <property type="chains" value="C=6-12"/>
</dbReference>
<dbReference type="PDB" id="5ZBA">
    <property type="method" value="X-ray"/>
    <property type="resolution" value="3.50 A"/>
    <property type="chains" value="C=1-136"/>
</dbReference>
<dbReference type="PDB" id="5ZBB">
    <property type="method" value="X-ray"/>
    <property type="resolution" value="3.60 A"/>
    <property type="chains" value="C=1-136"/>
</dbReference>
<dbReference type="PDB" id="6GEJ">
    <property type="method" value="EM"/>
    <property type="resolution" value="3.60 A"/>
    <property type="chains" value="A/B=1-136"/>
</dbReference>
<dbReference type="PDB" id="6GEN">
    <property type="method" value="EM"/>
    <property type="resolution" value="3.60 A"/>
    <property type="chains" value="A/B=1-136"/>
</dbReference>
<dbReference type="PDB" id="6J2P">
    <property type="method" value="X-ray"/>
    <property type="resolution" value="2.85 A"/>
    <property type="chains" value="E/F/G/H=2-8"/>
</dbReference>
<dbReference type="PDB" id="6KMJ">
    <property type="method" value="X-ray"/>
    <property type="resolution" value="1.40 A"/>
    <property type="chains" value="C=7-22"/>
</dbReference>
<dbReference type="PDB" id="7E9C">
    <property type="method" value="EM"/>
    <property type="resolution" value="3.50 A"/>
    <property type="chains" value="A/E=1-134"/>
</dbReference>
<dbReference type="PDB" id="7E9F">
    <property type="method" value="EM"/>
    <property type="resolution" value="4.00 A"/>
    <property type="chains" value="A/E=1-134"/>
</dbReference>
<dbReference type="PDB" id="7F3S">
    <property type="method" value="X-ray"/>
    <property type="resolution" value="1.40 A"/>
    <property type="chains" value="B=7-23"/>
</dbReference>
<dbReference type="PDB" id="7F4A">
    <property type="method" value="X-ray"/>
    <property type="resolution" value="2.00 A"/>
    <property type="chains" value="B=6-14"/>
</dbReference>
<dbReference type="PDB" id="7F4E">
    <property type="method" value="X-ray"/>
    <property type="resolution" value="1.78 A"/>
    <property type="chains" value="C=6-15"/>
</dbReference>
<dbReference type="PDB" id="7F5M">
    <property type="method" value="X-ray"/>
    <property type="resolution" value="2.40 A"/>
    <property type="chains" value="C=19-37"/>
</dbReference>
<dbReference type="PDB" id="7K7G">
    <property type="method" value="EM"/>
    <property type="resolution" value="4.20 A"/>
    <property type="chains" value="A/E=1-136"/>
</dbReference>
<dbReference type="PDB" id="7UQJ">
    <property type="method" value="EM"/>
    <property type="resolution" value="3.00 A"/>
    <property type="chains" value="G=1-25"/>
</dbReference>
<dbReference type="PDB" id="7XAY">
    <property type="method" value="X-ray"/>
    <property type="resolution" value="3.30 A"/>
    <property type="chains" value="D=2-136"/>
</dbReference>
<dbReference type="PDB" id="7Z0O">
    <property type="method" value="EM"/>
    <property type="resolution" value="2.80 A"/>
    <property type="chains" value="A/C=1-136"/>
</dbReference>
<dbReference type="PDB" id="8GHM">
    <property type="method" value="EM"/>
    <property type="resolution" value="12.00 A"/>
    <property type="chains" value="M=1-136"/>
</dbReference>
<dbReference type="PDB" id="8GHN">
    <property type="method" value="EM"/>
    <property type="resolution" value="2.96 A"/>
    <property type="chains" value="M=1-136"/>
</dbReference>
<dbReference type="PDB" id="8I3F">
    <property type="method" value="X-ray"/>
    <property type="resolution" value="1.62 A"/>
    <property type="chains" value="C=2-7"/>
</dbReference>
<dbReference type="PDB" id="8QKU">
    <property type="method" value="EM"/>
    <property type="resolution" value="3.80 A"/>
    <property type="chains" value="A/B=1-136"/>
</dbReference>
<dbReference type="PDB" id="8QKV">
    <property type="method" value="EM"/>
    <property type="resolution" value="4.70 A"/>
    <property type="chains" value="A/B=1-136"/>
</dbReference>
<dbReference type="PDB" id="8QYV">
    <property type="method" value="EM"/>
    <property type="resolution" value="3.50 A"/>
    <property type="chains" value="A/B=1-136"/>
</dbReference>
<dbReference type="PDB" id="8QZ0">
    <property type="method" value="EM"/>
    <property type="resolution" value="3.80 A"/>
    <property type="chains" value="A/B=1-136"/>
</dbReference>
<dbReference type="PDB" id="8XGC">
    <property type="method" value="EM"/>
    <property type="resolution" value="3.70 A"/>
    <property type="chains" value="N/R=1-136"/>
</dbReference>
<dbReference type="PDB" id="9FBW">
    <property type="method" value="EM"/>
    <property type="resolution" value="4.40 A"/>
    <property type="chains" value="A/B=1-136"/>
</dbReference>
<dbReference type="PDBsum" id="1ID3"/>
<dbReference type="PDBsum" id="1M1D"/>
<dbReference type="PDBsum" id="1PEG"/>
<dbReference type="PDBsum" id="1PU9"/>
<dbReference type="PDBsum" id="1PUA"/>
<dbReference type="PDBsum" id="1QSN"/>
<dbReference type="PDBsum" id="2CNX"/>
<dbReference type="PDBsum" id="2H2G"/>
<dbReference type="PDBsum" id="2IDC"/>
<dbReference type="PDBsum" id="2JMJ"/>
<dbReference type="PDBsum" id="2RNW"/>
<dbReference type="PDBsum" id="2RNX"/>
<dbReference type="PDBsum" id="2RSN"/>
<dbReference type="PDBsum" id="3MP1"/>
<dbReference type="PDBsum" id="3MP6"/>
<dbReference type="PDBsum" id="3Q33"/>
<dbReference type="PDBsum" id="4JJN"/>
<dbReference type="PDBsum" id="4KUD"/>
<dbReference type="PDBsum" id="4PSX"/>
<dbReference type="PDBsum" id="5D7E"/>
<dbReference type="PDBsum" id="5IOK"/>
<dbReference type="PDBsum" id="5ZBA"/>
<dbReference type="PDBsum" id="5ZBB"/>
<dbReference type="PDBsum" id="6GEJ"/>
<dbReference type="PDBsum" id="6GEN"/>
<dbReference type="PDBsum" id="6J2P"/>
<dbReference type="PDBsum" id="6KMJ"/>
<dbReference type="PDBsum" id="7E9C"/>
<dbReference type="PDBsum" id="7E9F"/>
<dbReference type="PDBsum" id="7F3S"/>
<dbReference type="PDBsum" id="7F4A"/>
<dbReference type="PDBsum" id="7F4E"/>
<dbReference type="PDBsum" id="7F5M"/>
<dbReference type="PDBsum" id="7K7G"/>
<dbReference type="PDBsum" id="7UQJ"/>
<dbReference type="PDBsum" id="7XAY"/>
<dbReference type="PDBsum" id="7Z0O"/>
<dbReference type="PDBsum" id="8GHM"/>
<dbReference type="PDBsum" id="8GHN"/>
<dbReference type="PDBsum" id="8I3F"/>
<dbReference type="PDBsum" id="8QKU"/>
<dbReference type="PDBsum" id="8QKV"/>
<dbReference type="PDBsum" id="8QYV"/>
<dbReference type="PDBsum" id="8QZ0"/>
<dbReference type="PDBsum" id="8XGC"/>
<dbReference type="PDBsum" id="9FBW"/>
<dbReference type="EMDB" id="EMD-14428"/>
<dbReference type="EMDB" id="EMD-18471"/>
<dbReference type="EMDB" id="EMD-18472"/>
<dbReference type="EMDB" id="EMD-18764"/>
<dbReference type="EMDB" id="EMD-18769"/>
<dbReference type="EMDB" id="EMD-22698"/>
<dbReference type="EMDB" id="EMD-26696"/>
<dbReference type="EMDB" id="EMD-31029"/>
<dbReference type="EMDB" id="EMD-31030"/>
<dbReference type="EMDB" id="EMD-4395"/>
<dbReference type="EMDB" id="EMD-4396"/>
<dbReference type="EMDB" id="EMD-50297"/>
<dbReference type="SMR" id="P61830"/>
<dbReference type="BioGRID" id="32711">
    <property type="interactions" value="951"/>
</dbReference>
<dbReference type="BioGRID" id="35796">
    <property type="interactions" value="726"/>
</dbReference>
<dbReference type="ComplexPortal" id="CPX-1101">
    <property type="entry name" value="RNA polymerase I upstream activating factor complex"/>
</dbReference>
<dbReference type="ComplexPortal" id="CPX-1610">
    <property type="entry name" value="Nucleosome, variant HTA2-HTB2"/>
</dbReference>
<dbReference type="ComplexPortal" id="CPX-1611">
    <property type="entry name" value="Nucleosome, variant HTA2-HTB1"/>
</dbReference>
<dbReference type="ComplexPortal" id="CPX-1612">
    <property type="entry name" value="Nucleosome, variant HTA1-HTB1"/>
</dbReference>
<dbReference type="ComplexPortal" id="CPX-1613">
    <property type="entry name" value="Nucleosome, variant HTZ1-HTB1"/>
</dbReference>
<dbReference type="ComplexPortal" id="CPX-1614">
    <property type="entry name" value="Nucleosome, variant HTZ1-HTB2"/>
</dbReference>
<dbReference type="ComplexPortal" id="CPX-2566">
    <property type="entry name" value="Nucleosome, variant HTA1-HTB2"/>
</dbReference>
<dbReference type="DIP" id="DIP-417N"/>
<dbReference type="FunCoup" id="P61830">
    <property type="interactions" value="1300"/>
</dbReference>
<dbReference type="IntAct" id="P61830">
    <property type="interactions" value="183"/>
</dbReference>
<dbReference type="MINT" id="P61830"/>
<dbReference type="STRING" id="4932.YBR010W"/>
<dbReference type="CarbonylDB" id="P61830"/>
<dbReference type="iPTMnet" id="P61830"/>
<dbReference type="PaxDb" id="4932-YBR010W"/>
<dbReference type="PeptideAtlas" id="P61830"/>
<dbReference type="EnsemblFungi" id="YBR010W_mRNA">
    <property type="protein sequence ID" value="YBR010W"/>
    <property type="gene ID" value="YBR010W"/>
</dbReference>
<dbReference type="EnsemblFungi" id="YNL031C_mRNA">
    <property type="protein sequence ID" value="YNL031C"/>
    <property type="gene ID" value="YNL031C"/>
</dbReference>
<dbReference type="GeneID" id="852295"/>
<dbReference type="GeneID" id="855700"/>
<dbReference type="KEGG" id="sce:YBR010W"/>
<dbReference type="KEGG" id="sce:YNL031C"/>
<dbReference type="AGR" id="SGD:S000000214"/>
<dbReference type="AGR" id="SGD:S000004976"/>
<dbReference type="SGD" id="S000000214">
    <property type="gene designation" value="HHT1"/>
</dbReference>
<dbReference type="SGD" id="S000004976">
    <property type="gene designation" value="HHT2"/>
</dbReference>
<dbReference type="VEuPathDB" id="FungiDB:YBR010W"/>
<dbReference type="VEuPathDB" id="FungiDB:YNL031C"/>
<dbReference type="eggNOG" id="KOG1745">
    <property type="taxonomic scope" value="Eukaryota"/>
</dbReference>
<dbReference type="GeneTree" id="ENSGT01110000267215"/>
<dbReference type="HOGENOM" id="CLU_078295_4_0_1"/>
<dbReference type="InParanoid" id="P61830"/>
<dbReference type="OMA" id="HIFAEMA"/>
<dbReference type="OrthoDB" id="842664at2759"/>
<dbReference type="BioCyc" id="YEAST:G3O-28997-MONOMER"/>
<dbReference type="Reactome" id="R-SCE-2299718">
    <property type="pathway name" value="Condensation of Prophase Chromosomes"/>
</dbReference>
<dbReference type="Reactome" id="R-SCE-2559580">
    <property type="pathway name" value="Oxidative Stress Induced Senescence"/>
</dbReference>
<dbReference type="Reactome" id="R-SCE-427359">
    <property type="pathway name" value="SIRT1 negatively regulates rRNA expression"/>
</dbReference>
<dbReference type="Reactome" id="R-SCE-5625886">
    <property type="pathway name" value="Activated PKN1 stimulates transcription of AR (androgen receptor) regulated genes KLK2 and KLK3"/>
</dbReference>
<dbReference type="Reactome" id="R-SCE-68616">
    <property type="pathway name" value="Assembly of the ORC complex at the origin of replication"/>
</dbReference>
<dbReference type="Reactome" id="R-SCE-73772">
    <property type="pathway name" value="RNA Polymerase I Promoter Escape"/>
</dbReference>
<dbReference type="Reactome" id="R-SCE-9018519">
    <property type="pathway name" value="Estrogen-dependent gene expression"/>
</dbReference>
<dbReference type="SABIO-RK" id="P61830"/>
<dbReference type="BioGRID-ORCS" id="852295">
    <property type="hits" value="0 hits in 10 CRISPR screens"/>
</dbReference>
<dbReference type="BioGRID-ORCS" id="855700">
    <property type="hits" value="0 hits in 10 CRISPR screens"/>
</dbReference>
<dbReference type="EvolutionaryTrace" id="P61830"/>
<dbReference type="PRO" id="PR:P61830"/>
<dbReference type="Proteomes" id="UP000002311">
    <property type="component" value="Chromosome II"/>
</dbReference>
<dbReference type="Proteomes" id="UP000002311">
    <property type="component" value="Chromosome XIV"/>
</dbReference>
<dbReference type="RNAct" id="P61830">
    <property type="molecule type" value="protein"/>
</dbReference>
<dbReference type="GO" id="GO:0043505">
    <property type="term" value="C:CENP-A containing nucleosome"/>
    <property type="evidence" value="ECO:0000314"/>
    <property type="project" value="SGD"/>
</dbReference>
<dbReference type="GO" id="GO:0000786">
    <property type="term" value="C:nucleosome"/>
    <property type="evidence" value="ECO:0000353"/>
    <property type="project" value="ComplexPortal"/>
</dbReference>
<dbReference type="GO" id="GO:0005634">
    <property type="term" value="C:nucleus"/>
    <property type="evidence" value="ECO:0007005"/>
    <property type="project" value="SGD"/>
</dbReference>
<dbReference type="GO" id="GO:0000500">
    <property type="term" value="C:RNA polymerase I upstream activating factor complex"/>
    <property type="evidence" value="ECO:0000353"/>
    <property type="project" value="ComplexPortal"/>
</dbReference>
<dbReference type="GO" id="GO:0008823">
    <property type="term" value="F:cupric reductase (NADH) activity"/>
    <property type="evidence" value="ECO:0000314"/>
    <property type="project" value="SGD"/>
</dbReference>
<dbReference type="GO" id="GO:0003677">
    <property type="term" value="F:DNA binding"/>
    <property type="evidence" value="ECO:0000304"/>
    <property type="project" value="SGD"/>
</dbReference>
<dbReference type="GO" id="GO:0046982">
    <property type="term" value="F:protein heterodimerization activity"/>
    <property type="evidence" value="ECO:0007669"/>
    <property type="project" value="InterPro"/>
</dbReference>
<dbReference type="GO" id="GO:0030527">
    <property type="term" value="F:structural constituent of chromatin"/>
    <property type="evidence" value="ECO:0007669"/>
    <property type="project" value="InterPro"/>
</dbReference>
<dbReference type="GO" id="GO:0009060">
    <property type="term" value="P:aerobic respiration"/>
    <property type="evidence" value="ECO:0000315"/>
    <property type="project" value="SGD"/>
</dbReference>
<dbReference type="GO" id="GO:0006325">
    <property type="term" value="P:chromatin organization"/>
    <property type="evidence" value="ECO:0000304"/>
    <property type="project" value="SGD"/>
</dbReference>
<dbReference type="GO" id="GO:0070911">
    <property type="term" value="P:global genome nucleotide-excision repair"/>
    <property type="evidence" value="ECO:0000315"/>
    <property type="project" value="SGD"/>
</dbReference>
<dbReference type="GO" id="GO:0006878">
    <property type="term" value="P:intracellular copper ion homeostasis"/>
    <property type="evidence" value="ECO:0000315"/>
    <property type="project" value="SGD"/>
</dbReference>
<dbReference type="GO" id="GO:0042790">
    <property type="term" value="P:nucleolar large rRNA transcription by RNA polymerase I"/>
    <property type="evidence" value="ECO:0000314"/>
    <property type="project" value="ComplexPortal"/>
</dbReference>
<dbReference type="GO" id="GO:0045943">
    <property type="term" value="P:positive regulation of transcription by RNA polymerase I"/>
    <property type="evidence" value="ECO:0000314"/>
    <property type="project" value="ComplexPortal"/>
</dbReference>
<dbReference type="GO" id="GO:0006355">
    <property type="term" value="P:regulation of DNA-templated transcription"/>
    <property type="evidence" value="ECO:0000303"/>
    <property type="project" value="ComplexPortal"/>
</dbReference>
<dbReference type="GO" id="GO:0009303">
    <property type="term" value="P:rRNA transcription"/>
    <property type="evidence" value="ECO:0000315"/>
    <property type="project" value="SGD"/>
</dbReference>
<dbReference type="GO" id="GO:0043935">
    <property type="term" value="P:sexual sporulation resulting in formation of a cellular spore"/>
    <property type="evidence" value="ECO:0000315"/>
    <property type="project" value="SGD"/>
</dbReference>
<dbReference type="CDD" id="cd22911">
    <property type="entry name" value="HFD_H3"/>
    <property type="match status" value="1"/>
</dbReference>
<dbReference type="FunFam" id="1.10.20.10:FF:000010">
    <property type="entry name" value="Histone H3"/>
    <property type="match status" value="1"/>
</dbReference>
<dbReference type="Gene3D" id="1.10.20.10">
    <property type="entry name" value="Histone, subunit A"/>
    <property type="match status" value="1"/>
</dbReference>
<dbReference type="IDEAL" id="IID50143"/>
<dbReference type="InterPro" id="IPR009072">
    <property type="entry name" value="Histone-fold"/>
</dbReference>
<dbReference type="InterPro" id="IPR007125">
    <property type="entry name" value="Histone_H2A/H2B/H3"/>
</dbReference>
<dbReference type="InterPro" id="IPR000164">
    <property type="entry name" value="Histone_H3/CENP-A"/>
</dbReference>
<dbReference type="PANTHER" id="PTHR11426">
    <property type="entry name" value="HISTONE H3"/>
    <property type="match status" value="1"/>
</dbReference>
<dbReference type="Pfam" id="PF00125">
    <property type="entry name" value="Histone"/>
    <property type="match status" value="1"/>
</dbReference>
<dbReference type="PRINTS" id="PR00622">
    <property type="entry name" value="HISTONEH3"/>
</dbReference>
<dbReference type="SMART" id="SM00428">
    <property type="entry name" value="H3"/>
    <property type="match status" value="1"/>
</dbReference>
<dbReference type="SUPFAM" id="SSF47113">
    <property type="entry name" value="Histone-fold"/>
    <property type="match status" value="1"/>
</dbReference>
<dbReference type="PROSITE" id="PS00322">
    <property type="entry name" value="HISTONE_H3_1"/>
    <property type="match status" value="1"/>
</dbReference>
<dbReference type="PROSITE" id="PS00959">
    <property type="entry name" value="HISTONE_H3_2"/>
    <property type="match status" value="1"/>
</dbReference>
<comment type="function">
    <text>Core component of nucleosome. Nucleosomes wrap and compact DNA into chromatin, limiting DNA accessibility to the cellular machineries which require DNA as a template. Histones thereby play a central role in transcription regulation, DNA repair, DNA replication and chromosomal stability. DNA accessibility is regulated via a complex set of post-translational modifications of histones, also called histone code, and nucleosome remodeling. Component of the UAF (upstream activation factor) complex which interacts with the upstream element of the RNA polymerase I promoter and forms a stable preinitiation complex. Together with SPT15/TBP, UAF seems to stimulate basal transcription to a fully activated level.</text>
</comment>
<comment type="subunit">
    <text evidence="40">The nucleosome is a histone octamer containing two molecules each of H2A, H2B, H3 and H4 assembled in one H3-H4 heterotetramer and two H2A-H2B heterodimers. The octamer wraps approximately 147 bp of DNA. Histone H3 is a component of the UAF (upstream activation factor) complex, which consists of UAF30, RRN5, RRN9, RRN10, and histones H3 and H4.</text>
</comment>
<comment type="interaction">
    <interactant intactId="EBI-8098">
        <id>P61830</id>
    </interactant>
    <interactant intactId="EBI-3003">
        <id>P32447</id>
        <label>ASF1</label>
    </interactant>
    <organismsDiffer>false</organismsDiffer>
    <experiments>4</experiments>
</comment>
<comment type="interaction">
    <interactant intactId="EBI-8098">
        <id>P61830</id>
    </interactant>
    <interactant intactId="EBI-3493">
        <id>P35817</id>
        <label>BDF1</label>
    </interactant>
    <organismsDiffer>false</organismsDiffer>
    <experiments>4</experiments>
</comment>
<comment type="interaction">
    <interactant intactId="EBI-8098">
        <id>P61830</id>
    </interactant>
    <interactant intactId="EBI-6951">
        <id>P38911</id>
        <label>FPR3</label>
    </interactant>
    <organismsDiffer>false</organismsDiffer>
    <experiments>3</experiments>
</comment>
<comment type="interaction">
    <interactant intactId="EBI-8098">
        <id>P61830</id>
    </interactant>
    <interactant intactId="EBI-6956">
        <id>Q06205</id>
        <label>FPR4</label>
    </interactant>
    <organismsDiffer>false</organismsDiffer>
    <experiments>7</experiments>
</comment>
<comment type="interaction">
    <interactant intactId="EBI-8098">
        <id>P61830</id>
    </interactant>
    <interactant intactId="EBI-8113">
        <id>P02309</id>
        <label>HHF2</label>
    </interactant>
    <organismsDiffer>false</organismsDiffer>
    <experiments>12</experiments>
</comment>
<comment type="interaction">
    <interactant intactId="EBI-8098">
        <id>P61830</id>
    </interactant>
    <interactant intactId="EBI-8475">
        <id>P53096</id>
        <label>HOS2</label>
    </interactant>
    <organismsDiffer>false</organismsDiffer>
    <experiments>2</experiments>
</comment>
<comment type="interaction">
    <interactant intactId="EBI-8098">
        <id>P61830</id>
    </interactant>
    <interactant intactId="EBI-27863">
        <id>Q04636</id>
        <label>POB3</label>
    </interactant>
    <organismsDiffer>false</organismsDiffer>
    <experiments>4</experiments>
</comment>
<comment type="interaction">
    <interactant intactId="EBI-8098">
        <id>P61830</id>
    </interactant>
    <interactant intactId="EBI-29119">
        <id>P40161</id>
        <label>RTT106</label>
    </interactant>
    <organismsDiffer>false</organismsDiffer>
    <experiments>7</experiments>
</comment>
<comment type="interaction">
    <interactant intactId="EBI-8098">
        <id>P61830</id>
    </interactant>
    <interactant intactId="EBI-16985">
        <id>P46995</id>
        <label>SET2</label>
    </interactant>
    <organismsDiffer>false</organismsDiffer>
    <experiments>2</experiments>
</comment>
<comment type="interaction">
    <interactant intactId="EBI-8098">
        <id>P61830</id>
    </interactant>
    <interactant intactId="EBI-16993">
        <id>P36124</id>
        <label>SET3</label>
    </interactant>
    <organismsDiffer>false</organismsDiffer>
    <experiments>2</experiments>
</comment>
<comment type="interaction">
    <interactant intactId="EBI-8098">
        <id>P61830</id>
    </interactant>
    <interactant intactId="EBI-24263">
        <id>P38890</id>
        <label>SET5</label>
    </interactant>
    <organismsDiffer>false</organismsDiffer>
    <experiments>2</experiments>
</comment>
<comment type="interaction">
    <interactant intactId="EBI-8098">
        <id>P61830</id>
    </interactant>
    <interactant intactId="EBI-18410">
        <id>P32597</id>
        <label>STH1</label>
    </interactant>
    <organismsDiffer>false</organismsDiffer>
    <experiments>6</experiments>
</comment>
<comment type="interaction">
    <interactant intactId="EBI-8098">
        <id>P61830</id>
    </interactant>
    <interactant intactId="EBI-31890">
        <id>Q08465</id>
        <label>YNG1</label>
    </interactant>
    <organismsDiffer>false</organismsDiffer>
    <experiments>5</experiments>
</comment>
<comment type="subcellular location">
    <subcellularLocation>
        <location>Nucleus</location>
    </subcellularLocation>
    <subcellularLocation>
        <location>Chromosome</location>
    </subcellularLocation>
</comment>
<comment type="PTM">
    <text evidence="4 5 22">Phosphorylated by IPL1 to form H3S10ph in a cell cycle-dependent manner during mitosis and meiosis. H3S10ph is also formed by SNF1, promotes subsequent H3K14ac formation by GCN5, and is required for transcriptional activation through TBP recruitment to the promoters. Dephosphorylation is performed by GLC7.</text>
</comment>
<comment type="PTM">
    <text evidence="7 8 9 10 11 12 13 14 15 16 17 18 19 21 23 25 27 28 29 32">Mono-, di- and trimethylated by the COMPASS complex to form H3K4me1/2/3. H3K4me activates gene expression by regulating transcription elongation and plays a role in telomere length maintenance. H3K4me enrichment correlates with transcription levels, and occurs in a 5' to 3' gradient with H3K4me3 enrichment at the 5'-end of genes, shifting to H3K4me2 and then H3K4me1. Methylated by SET2 to form H3K36me. H3K36me represses gene expression. Methylated by DOT1 to form H3K79me. H3K79me is required for association of SIR proteins with telomeric regions and for telomeric silencing. The COMPASS-mediated formation of H3K4me2/3 and the DOT1-mediated formation of H3K79me require H2BK123ub1.</text>
</comment>
<comment type="PTM">
    <text evidence="2 3 4 6 22 24 26 27 30 31 32 33 41">Acetylation of histone H3 leads to transcriptional activation. H3K14ac formation by GCN5, a component of the SAGA complex, is promoted by H3S10ph. Further acetylated by GCN5 to form H3K9ac, H3K18ac, H3K23ac, H3K27ac and H3K36ac. H3K14ac can also be formed by ESA1, a component of the NuA4 histone acetyltransferase (HAT) complex. H3K56ac formation occurs predominantly in newly synthesized H3 molecules during G1, S and G2/M of the cell cycle and may be involved in DNA repair.</text>
</comment>
<comment type="PTM">
    <text evidence="36">Crotonylation (Kcr) marks active promoters and enhancers and confers resistance to transcriptional repressors.</text>
</comment>
<comment type="miscellaneous">
    <text evidence="20">Present with 213000 molecules/cell in log phase SD medium.</text>
</comment>
<comment type="similarity">
    <text evidence="42">Belongs to the histone H3 family.</text>
</comment>
<comment type="caution">
    <text evidence="42">To ensure consistency between histone entries, we follow the 'Brno' nomenclature for histone modifications, with positions referring to those used in the literature for the 'closest' model organism. Due to slight variations in histone sequences between organisms and to the presence of initiator methionine in UniProtKB/Swiss-Prot sequences, the actual positions of modified amino acids in the sequence generally differ. In this entry the following conventions are used: H3K4me1/2/3 = mono-, di- and trimethylated Lys-5; H3K9ac = acetylated Lys-10; H3K9me1 = monomethylated Lys-10; H3S10ph = phosphorylated Ser-11; H3K14ac = acetylated Lys-15; H3K14me2 = dimethylated Lys-15; H3K18ac = acetylated Lys-19; H3K18me1 = monomethylated Lys-19; H3K23ac = acetylated Lys-24; H3K23me1 = monomethylated Lys-24; H3K27ac = acetylated Lys-28; H3K27me1/2/3 = mono-, di- and trimethylated Lys-28; H3K36ac = acetylated Lys-37; H3K36me1/2/3 = mono-, di- and trimethylated Lys-37; H3K56ac = acetylated Lys-57; H3K64ac = acetylated Lys-65; H3K79me1/2/3 = mono-, di- and trimethylated Lys-80.</text>
</comment>
<gene>
    <name type="primary">HHT1</name>
    <name type="ordered locus">YBR010W</name>
    <name type="ORF">YBR0201</name>
</gene>
<gene>
    <name type="primary">HHT2</name>
    <name type="synonym">SIN2</name>
    <name type="ordered locus">YNL031C</name>
    <name type="ORF">N2749</name>
</gene>
<evidence type="ECO:0000256" key="1">
    <source>
        <dbReference type="SAM" id="MobiDB-lite"/>
    </source>
</evidence>
<evidence type="ECO:0000269" key="2">
    <source>
    </source>
</evidence>
<evidence type="ECO:0000269" key="3">
    <source>
    </source>
</evidence>
<evidence type="ECO:0000269" key="4">
    <source>
    </source>
</evidence>
<evidence type="ECO:0000269" key="5">
    <source>
    </source>
</evidence>
<evidence type="ECO:0000269" key="6">
    <source>
    </source>
</evidence>
<evidence type="ECO:0000269" key="7">
    <source>
    </source>
</evidence>
<evidence type="ECO:0000269" key="8">
    <source>
    </source>
</evidence>
<evidence type="ECO:0000269" key="9">
    <source>
    </source>
</evidence>
<evidence type="ECO:0000269" key="10">
    <source>
    </source>
</evidence>
<evidence type="ECO:0000269" key="11">
    <source>
    </source>
</evidence>
<evidence type="ECO:0000269" key="12">
    <source>
    </source>
</evidence>
<evidence type="ECO:0000269" key="13">
    <source>
    </source>
</evidence>
<evidence type="ECO:0000269" key="14">
    <source>
    </source>
</evidence>
<evidence type="ECO:0000269" key="15">
    <source>
    </source>
</evidence>
<evidence type="ECO:0000269" key="16">
    <source>
    </source>
</evidence>
<evidence type="ECO:0000269" key="17">
    <source>
    </source>
</evidence>
<evidence type="ECO:0000269" key="18">
    <source>
    </source>
</evidence>
<evidence type="ECO:0000269" key="19">
    <source>
    </source>
</evidence>
<evidence type="ECO:0000269" key="20">
    <source>
    </source>
</evidence>
<evidence type="ECO:0000269" key="21">
    <source>
    </source>
</evidence>
<evidence type="ECO:0000269" key="22">
    <source>
    </source>
</evidence>
<evidence type="ECO:0000269" key="23">
    <source>
    </source>
</evidence>
<evidence type="ECO:0000269" key="24">
    <source>
    </source>
</evidence>
<evidence type="ECO:0000269" key="25">
    <source>
    </source>
</evidence>
<evidence type="ECO:0000269" key="26">
    <source>
    </source>
</evidence>
<evidence type="ECO:0000269" key="27">
    <source>
    </source>
</evidence>
<evidence type="ECO:0000269" key="28">
    <source>
    </source>
</evidence>
<evidence type="ECO:0000269" key="29">
    <source>
    </source>
</evidence>
<evidence type="ECO:0000269" key="30">
    <source>
    </source>
</evidence>
<evidence type="ECO:0000269" key="31">
    <source>
    </source>
</evidence>
<evidence type="ECO:0000269" key="32">
    <source>
    </source>
</evidence>
<evidence type="ECO:0000269" key="33">
    <source>
    </source>
</evidence>
<evidence type="ECO:0000269" key="34">
    <source>
    </source>
</evidence>
<evidence type="ECO:0000269" key="35">
    <source>
    </source>
</evidence>
<evidence type="ECO:0000269" key="36">
    <source>
    </source>
</evidence>
<evidence type="ECO:0000269" key="37">
    <source>
    </source>
</evidence>
<evidence type="ECO:0000269" key="38">
    <source>
    </source>
</evidence>
<evidence type="ECO:0000269" key="39">
    <source>
    </source>
</evidence>
<evidence type="ECO:0000269" key="40">
    <source>
    </source>
</evidence>
<evidence type="ECO:0000269" key="41">
    <source>
    </source>
</evidence>
<evidence type="ECO:0000305" key="42"/>
<evidence type="ECO:0007829" key="43">
    <source>
        <dbReference type="PDB" id="2IDC"/>
    </source>
</evidence>
<evidence type="ECO:0007829" key="44">
    <source>
        <dbReference type="PDB" id="6KMJ"/>
    </source>
</evidence>
<evidence type="ECO:0007829" key="45">
    <source>
        <dbReference type="PDB" id="7F5M"/>
    </source>
</evidence>
<evidence type="ECO:0007829" key="46">
    <source>
        <dbReference type="PDB" id="7Z0O"/>
    </source>
</evidence>
<evidence type="ECO:0007829" key="47">
    <source>
        <dbReference type="PDB" id="8I3F"/>
    </source>
</evidence>
<sequence length="136" mass="15356">MARTKQTARKSTGGKAPRKQLASKAARKSAPSTGGVKKPHRYKPGTVALREIRRFQKSTELLIRKLPFQRLVREIAQDFKTDLRFQSSAIGALQESVEAYLVSLFEDTNLAAIHAKRVTIQKKDIKLARRLRGERS</sequence>
<feature type="initiator methionine" description="Removed" evidence="38 39">
    <location>
        <position position="1"/>
    </location>
</feature>
<feature type="chain" id="PRO_0000221370" description="Histone H3">
    <location>
        <begin position="2"/>
        <end position="136"/>
    </location>
</feature>
<feature type="region of interest" description="Disordered" evidence="1">
    <location>
        <begin position="1"/>
        <end position="43"/>
    </location>
</feature>
<feature type="modified residue" description="N6,N6,N6-trimethyllysine; alternate" evidence="7 8 9 13 14 18 25 27 28 29 32">
    <location>
        <position position="5"/>
    </location>
</feature>
<feature type="modified residue" description="N6,N6-dimethyllysine; alternate" evidence="7 8 9 13 14 18 25 27 28 29 32">
    <location>
        <position position="5"/>
    </location>
</feature>
<feature type="modified residue" description="N6-methyllysine; alternate" evidence="7 8 9 13 14 18 25 27 28 29 32">
    <location>
        <position position="5"/>
    </location>
</feature>
<feature type="modified residue" description="N6-acetyllysine; alternate" evidence="6 27 32 36 41">
    <location>
        <position position="10"/>
    </location>
</feature>
<feature type="modified residue" description="N6-crotonyllysine; alternate" evidence="36">
    <location>
        <position position="10"/>
    </location>
</feature>
<feature type="modified residue" description="N6-methyllysine; alternate" evidence="32">
    <location>
        <position position="10"/>
    </location>
</feature>
<feature type="modified residue" description="Phosphoserine" evidence="4 5 22">
    <location>
        <position position="11"/>
    </location>
</feature>
<feature type="modified residue" description="N6,N6-dimethyllysine; alternate" evidence="32">
    <location>
        <position position="15"/>
    </location>
</feature>
<feature type="modified residue" description="N6-acetyllysine; alternate" evidence="2 4 6 22 27 32 34 41">
    <location>
        <position position="15"/>
    </location>
</feature>
<feature type="modified residue" description="N6-butyryllysine; alternate" evidence="34 37">
    <location>
        <position position="15"/>
    </location>
</feature>
<feature type="modified residue" description="N6-acetyllysine; alternate" evidence="6 27 32 34 41">
    <location>
        <position position="19"/>
    </location>
</feature>
<feature type="modified residue" description="N6-butyryllysine; alternate" evidence="37">
    <location>
        <position position="19"/>
    </location>
</feature>
<feature type="modified residue" description="N6-methyllysine; alternate" evidence="32">
    <location>
        <position position="19"/>
    </location>
</feature>
<feature type="modified residue" description="N6-acetyllysine; alternate" evidence="6 32 34">
    <location>
        <position position="24"/>
    </location>
</feature>
<feature type="modified residue" description="N6-butyryllysine; alternate" evidence="37">
    <location>
        <position position="24"/>
    </location>
</feature>
<feature type="modified residue" description="N6-methyllysine; alternate" evidence="32">
    <location>
        <position position="24"/>
    </location>
</feature>
<feature type="modified residue" description="N6-propionyllysine; alternate" evidence="34">
    <location>
        <position position="24"/>
    </location>
</feature>
<feature type="modified residue" description="N6,N6,N6-trimethyllysine; alternate" evidence="32">
    <location>
        <position position="28"/>
    </location>
</feature>
<feature type="modified residue" description="N6,N6-dimethyllysine; alternate" evidence="32">
    <location>
        <position position="28"/>
    </location>
</feature>
<feature type="modified residue" description="N6-acetyllysine; alternate" evidence="6 32 34">
    <location>
        <position position="28"/>
    </location>
</feature>
<feature type="modified residue" description="N6-butyryllysine; alternate" evidence="34">
    <location>
        <position position="28"/>
    </location>
</feature>
<feature type="modified residue" description="N6-methyllysine; alternate" evidence="32">
    <location>
        <position position="28"/>
    </location>
</feature>
<feature type="modified residue" description="N6,N6,N6-trimethyllysine; alternate" evidence="10 13 16 17 19 23 32">
    <location>
        <position position="37"/>
    </location>
</feature>
<feature type="modified residue" description="N6,N6-dimethyllysine; alternate" evidence="10 13 16 17 19 23 32 34">
    <location>
        <position position="37"/>
    </location>
</feature>
<feature type="modified residue" description="N6-acetyllysine; alternate" evidence="31 32 34">
    <location>
        <position position="37"/>
    </location>
</feature>
<feature type="modified residue" description="N6-methyllysine; alternate" evidence="10 13 16 17 19 23 32 34">
    <location>
        <position position="37"/>
    </location>
</feature>
<feature type="modified residue" description="N6-acetyllysine; alternate" evidence="34">
    <location>
        <position position="38"/>
    </location>
</feature>
<feature type="modified residue" description="N6-methyllysine; alternate" evidence="34">
    <location>
        <position position="38"/>
    </location>
</feature>
<feature type="modified residue" description="N6-acetyllysine" evidence="24 26 30 32 33 34">
    <location>
        <position position="57"/>
    </location>
</feature>
<feature type="modified residue" description="N6-malonyllysine; alternate" evidence="35">
    <location>
        <position position="57"/>
    </location>
</feature>
<feature type="modified residue" description="N6-propionyllysine; alternate" evidence="34">
    <location>
        <position position="57"/>
    </location>
</feature>
<feature type="modified residue" description="N6-acetyllysine" evidence="32">
    <location>
        <position position="65"/>
    </location>
</feature>
<feature type="modified residue" description="N6,N6,N6-trimethyllysine; alternate" evidence="11 12 13 15 21 32">
    <location>
        <position position="80"/>
    </location>
</feature>
<feature type="modified residue" description="N6,N6-dimethyllysine; alternate" evidence="11 12 13 15 21 32">
    <location>
        <position position="80"/>
    </location>
</feature>
<feature type="modified residue" description="N6-methyllysine; alternate" evidence="11 12 13 15 21 32">
    <location>
        <position position="80"/>
    </location>
</feature>
<feature type="modified residue" description="N6-succinyllysine; alternate" evidence="35">
    <location>
        <position position="80"/>
    </location>
</feature>
<feature type="mutagenesis site" description="Impairs histone H3 phosphorylation and reduces transcription of some GCN5 regulated genes." evidence="4 5">
    <original>S</original>
    <variation>A</variation>
    <location>
        <position position="11"/>
    </location>
</feature>
<feature type="mutagenesis site" description="Lethal." evidence="30">
    <original>R</original>
    <variation>A</variation>
    <variation>K</variation>
    <variation>Q</variation>
    <location>
        <position position="53"/>
    </location>
</feature>
<feature type="mutagenesis site" description="Increases sensitivity to genotoxic agents inducing DNA breaks during replication." evidence="24 26 30">
    <original>K</original>
    <variation>A</variation>
    <variation>Q</variation>
    <variation>R</variation>
    <location>
        <position position="57"/>
    </location>
</feature>
<feature type="mutagenesis site" description="Compromises telomeric silencing." evidence="11 30">
    <original>K</original>
    <variation>A</variation>
    <variation>P</variation>
    <variation>Q</variation>
    <location>
        <position position="80"/>
    </location>
</feature>
<feature type="mutagenesis site" description="Lethal." evidence="30">
    <original>T</original>
    <variation>A</variation>
    <variation>E</variation>
    <location>
        <position position="119"/>
    </location>
</feature>
<feature type="sequence conflict" description="In Ref. 6; AA sequence." evidence="42" ref="6">
    <original>D</original>
    <variation>E</variation>
    <location>
        <position position="124"/>
    </location>
</feature>
<feature type="strand" evidence="47">
    <location>
        <begin position="3"/>
        <end position="7"/>
    </location>
</feature>
<feature type="helix" evidence="44">
    <location>
        <begin position="19"/>
        <end position="22"/>
    </location>
</feature>
<feature type="helix" evidence="45">
    <location>
        <begin position="23"/>
        <end position="26"/>
    </location>
</feature>
<feature type="strand" evidence="46">
    <location>
        <begin position="42"/>
        <end position="44"/>
    </location>
</feature>
<feature type="helix" evidence="46">
    <location>
        <begin position="49"/>
        <end position="59"/>
    </location>
</feature>
<feature type="helix" evidence="46">
    <location>
        <begin position="65"/>
        <end position="78"/>
    </location>
</feature>
<feature type="helix" evidence="46">
    <location>
        <begin position="87"/>
        <end position="114"/>
    </location>
</feature>
<feature type="strand" evidence="46">
    <location>
        <begin position="118"/>
        <end position="120"/>
    </location>
</feature>
<feature type="helix" evidence="43">
    <location>
        <begin position="124"/>
        <end position="131"/>
    </location>
</feature>
<accession>P61830</accession>
<accession>D6VQ11</accession>
<accession>E9PAG1</accession>
<accession>P02303</accession>
<accession>P13996</accession>
<accession>Q6B1U3</accession>
<accession>Q6Q7G9</accession>
<reference key="1">
    <citation type="journal article" date="1983" name="J. Mol. Biol.">
        <title>DNA sequences of yeast H3 and H4 histone genes from two non-allelic gene sets encode identical H3 and H4 proteins.</title>
        <authorList>
            <person name="Smith M.M."/>
            <person name="Andresson O.S."/>
        </authorList>
    </citation>
    <scope>NUCLEOTIDE SEQUENCE [GENOMIC DNA]</scope>
</reference>
<reference key="2">
    <citation type="journal article" date="1994" name="EMBO J.">
        <title>Complete DNA sequence of yeast chromosome II.</title>
        <authorList>
            <person name="Feldmann H."/>
            <person name="Aigle M."/>
            <person name="Aljinovic G."/>
            <person name="Andre B."/>
            <person name="Baclet M.C."/>
            <person name="Barthe C."/>
            <person name="Baur A."/>
            <person name="Becam A.-M."/>
            <person name="Biteau N."/>
            <person name="Boles E."/>
            <person name="Brandt T."/>
            <person name="Brendel M."/>
            <person name="Brueckner M."/>
            <person name="Bussereau F."/>
            <person name="Christiansen C."/>
            <person name="Contreras R."/>
            <person name="Crouzet M."/>
            <person name="Cziepluch C."/>
            <person name="Demolis N."/>
            <person name="Delaveau T."/>
            <person name="Doignon F."/>
            <person name="Domdey H."/>
            <person name="Duesterhus S."/>
            <person name="Dubois E."/>
            <person name="Dujon B."/>
            <person name="El Bakkoury M."/>
            <person name="Entian K.-D."/>
            <person name="Feuermann M."/>
            <person name="Fiers W."/>
            <person name="Fobo G.M."/>
            <person name="Fritz C."/>
            <person name="Gassenhuber J."/>
            <person name="Glansdorff N."/>
            <person name="Goffeau A."/>
            <person name="Grivell L.A."/>
            <person name="de Haan M."/>
            <person name="Hein C."/>
            <person name="Herbert C.J."/>
            <person name="Hollenberg C.P."/>
            <person name="Holmstroem K."/>
            <person name="Jacq C."/>
            <person name="Jacquet M."/>
            <person name="Jauniaux J.-C."/>
            <person name="Jonniaux J.-L."/>
            <person name="Kallesoee T."/>
            <person name="Kiesau P."/>
            <person name="Kirchrath L."/>
            <person name="Koetter P."/>
            <person name="Korol S."/>
            <person name="Liebl S."/>
            <person name="Logghe M."/>
            <person name="Lohan A.J.E."/>
            <person name="Louis E.J."/>
            <person name="Li Z.Y."/>
            <person name="Maat M.J."/>
            <person name="Mallet L."/>
            <person name="Mannhaupt G."/>
            <person name="Messenguy F."/>
            <person name="Miosga T."/>
            <person name="Molemans F."/>
            <person name="Mueller S."/>
            <person name="Nasr F."/>
            <person name="Obermaier B."/>
            <person name="Perea J."/>
            <person name="Pierard A."/>
            <person name="Piravandi E."/>
            <person name="Pohl F.M."/>
            <person name="Pohl T.M."/>
            <person name="Potier S."/>
            <person name="Proft M."/>
            <person name="Purnelle B."/>
            <person name="Ramezani Rad M."/>
            <person name="Rieger M."/>
            <person name="Rose M."/>
            <person name="Schaaff-Gerstenschlaeger I."/>
            <person name="Scherens B."/>
            <person name="Schwarzlose C."/>
            <person name="Skala J."/>
            <person name="Slonimski P.P."/>
            <person name="Smits P.H.M."/>
            <person name="Souciet J.-L."/>
            <person name="Steensma H.Y."/>
            <person name="Stucka R."/>
            <person name="Urrestarazu L.A."/>
            <person name="van der Aart Q.J.M."/>
            <person name="Van Dyck L."/>
            <person name="Vassarotti A."/>
            <person name="Vetter I."/>
            <person name="Vierendeels F."/>
            <person name="Vissers S."/>
            <person name="Wagner G."/>
            <person name="de Wergifosse P."/>
            <person name="Wolfe K.H."/>
            <person name="Zagulski M."/>
            <person name="Zimmermann F.K."/>
            <person name="Mewes H.-W."/>
            <person name="Kleine K."/>
        </authorList>
    </citation>
    <scope>NUCLEOTIDE SEQUENCE [LARGE SCALE GENOMIC DNA] (HHT1)</scope>
    <source>
        <strain>ATCC 204508 / S288c</strain>
    </source>
</reference>
<reference key="3">
    <citation type="journal article" date="1997" name="Nature">
        <title>The nucleotide sequence of Saccharomyces cerevisiae chromosome XIV and its evolutionary implications.</title>
        <authorList>
            <person name="Philippsen P."/>
            <person name="Kleine K."/>
            <person name="Poehlmann R."/>
            <person name="Duesterhoeft A."/>
            <person name="Hamberg K."/>
            <person name="Hegemann J.H."/>
            <person name="Obermaier B."/>
            <person name="Urrestarazu L.A."/>
            <person name="Aert R."/>
            <person name="Albermann K."/>
            <person name="Altmann R."/>
            <person name="Andre B."/>
            <person name="Baladron V."/>
            <person name="Ballesta J.P.G."/>
            <person name="Becam A.-M."/>
            <person name="Beinhauer J.D."/>
            <person name="Boskovic J."/>
            <person name="Buitrago M.J."/>
            <person name="Bussereau F."/>
            <person name="Coster F."/>
            <person name="Crouzet M."/>
            <person name="D'Angelo M."/>
            <person name="Dal Pero F."/>
            <person name="De Antoni A."/>
            <person name="del Rey F."/>
            <person name="Doignon F."/>
            <person name="Domdey H."/>
            <person name="Dubois E."/>
            <person name="Fiedler T.A."/>
            <person name="Fleig U."/>
            <person name="Floeth M."/>
            <person name="Fritz C."/>
            <person name="Gaillardin C."/>
            <person name="Garcia-Cantalejo J.M."/>
            <person name="Glansdorff N."/>
            <person name="Goffeau A."/>
            <person name="Gueldener U."/>
            <person name="Herbert C.J."/>
            <person name="Heumann K."/>
            <person name="Heuss-Neitzel D."/>
            <person name="Hilbert H."/>
            <person name="Hinni K."/>
            <person name="Iraqui Houssaini I."/>
            <person name="Jacquet M."/>
            <person name="Jimenez A."/>
            <person name="Jonniaux J.-L."/>
            <person name="Karpfinger-Hartl L."/>
            <person name="Lanfranchi G."/>
            <person name="Lepingle A."/>
            <person name="Levesque H."/>
            <person name="Lyck R."/>
            <person name="Maftahi M."/>
            <person name="Mallet L."/>
            <person name="Maurer C.T.C."/>
            <person name="Messenguy F."/>
            <person name="Mewes H.-W."/>
            <person name="Moestl D."/>
            <person name="Nasr F."/>
            <person name="Nicaud J.-M."/>
            <person name="Niedenthal R.K."/>
            <person name="Pandolfo D."/>
            <person name="Pierard A."/>
            <person name="Piravandi E."/>
            <person name="Planta R.J."/>
            <person name="Pohl T.M."/>
            <person name="Purnelle B."/>
            <person name="Rebischung C."/>
            <person name="Remacha M.A."/>
            <person name="Revuelta J.L."/>
            <person name="Rinke M."/>
            <person name="Saiz J.E."/>
            <person name="Sartorello F."/>
            <person name="Scherens B."/>
            <person name="Sen-Gupta M."/>
            <person name="Soler-Mira A."/>
            <person name="Urbanus J.H.M."/>
            <person name="Valle G."/>
            <person name="Van Dyck L."/>
            <person name="Verhasselt P."/>
            <person name="Vierendeels F."/>
            <person name="Vissers S."/>
            <person name="Voet M."/>
            <person name="Volckaert G."/>
            <person name="Wach A."/>
            <person name="Wambutt R."/>
            <person name="Wedler H."/>
            <person name="Zollner A."/>
            <person name="Hani J."/>
        </authorList>
    </citation>
    <scope>NUCLEOTIDE SEQUENCE [LARGE SCALE GENOMIC DNA] (HHT2)</scope>
    <source>
        <strain>ATCC 204508 / S288c</strain>
    </source>
</reference>
<reference key="4">
    <citation type="journal article" date="2014" name="G3 (Bethesda)">
        <title>The reference genome sequence of Saccharomyces cerevisiae: Then and now.</title>
        <authorList>
            <person name="Engel S.R."/>
            <person name="Dietrich F.S."/>
            <person name="Fisk D.G."/>
            <person name="Binkley G."/>
            <person name="Balakrishnan R."/>
            <person name="Costanzo M.C."/>
            <person name="Dwight S.S."/>
            <person name="Hitz B.C."/>
            <person name="Karra K."/>
            <person name="Nash R.S."/>
            <person name="Weng S."/>
            <person name="Wong E.D."/>
            <person name="Lloyd P."/>
            <person name="Skrzypek M.S."/>
            <person name="Miyasato S.R."/>
            <person name="Simison M."/>
            <person name="Cherry J.M."/>
        </authorList>
    </citation>
    <scope>GENOME REANNOTATION (HHT1 AND HHT2)</scope>
    <source>
        <strain>ATCC 204508 / S288c</strain>
    </source>
</reference>
<reference key="5">
    <citation type="journal article" date="2007" name="Genome Res.">
        <title>Approaching a complete repository of sequence-verified protein-encoding clones for Saccharomyces cerevisiae.</title>
        <authorList>
            <person name="Hu Y."/>
            <person name="Rolfs A."/>
            <person name="Bhullar B."/>
            <person name="Murthy T.V.S."/>
            <person name="Zhu C."/>
            <person name="Berger M.F."/>
            <person name="Camargo A.A."/>
            <person name="Kelley F."/>
            <person name="McCarron S."/>
            <person name="Jepson D."/>
            <person name="Richardson A."/>
            <person name="Raphael J."/>
            <person name="Moreira D."/>
            <person name="Taycher E."/>
            <person name="Zuo D."/>
            <person name="Mohr S."/>
            <person name="Kane M.F."/>
            <person name="Williamson J."/>
            <person name="Simpson A.J.G."/>
            <person name="Bulyk M.L."/>
            <person name="Harlow E."/>
            <person name="Marsischky G."/>
            <person name="Kolodner R.D."/>
            <person name="LaBaer J."/>
        </authorList>
    </citation>
    <scope>NUCLEOTIDE SEQUENCE [GENOMIC DNA] (HHT1 AND HHT2)</scope>
    <source>
        <strain>ATCC 204508 / S288c</strain>
    </source>
</reference>
<reference key="6">
    <citation type="journal article" date="1982" name="Eur. J. Biochem.">
        <title>The primary structure of yeast histone H3.</title>
        <authorList>
            <person name="Brandt W.F."/>
            <person name="von Holt C."/>
        </authorList>
    </citation>
    <scope>PROTEIN SEQUENCE OF 2-136</scope>
</reference>
<reference key="7">
    <citation type="journal article" date="2004" name="Genome Biol.">
        <title>Population genetic variation in gene expression is associated with phenotypic variation in Saccharomyces cerevisiae.</title>
        <authorList>
            <person name="Fay J.C."/>
            <person name="McCullough H.L."/>
            <person name="Sniegowski P.D."/>
            <person name="Eisen M.B."/>
        </authorList>
    </citation>
    <scope>NUCLEOTIDE SEQUENCE [GENOMIC DNA] OF 1-134</scope>
    <source>
        <strain>ATCC 204508 / S288c</strain>
        <strain>M13</strain>
        <strain>M14</strain>
        <strain>M22</strain>
        <strain>M32</strain>
        <strain>M34</strain>
        <strain>M5</strain>
        <strain>M8</strain>
        <strain>YPS163</strain>
    </source>
</reference>
<reference key="8">
    <citation type="journal article" date="1976" name="FEBS Lett.">
        <title>The occurrence of histone H3 and H4 in yeast.</title>
        <authorList>
            <person name="Brandt W.F."/>
            <person name="von Holt C."/>
        </authorList>
    </citation>
    <scope>PROTEIN SEQUENCE OF 2-16</scope>
</reference>
<reference key="9">
    <citation type="journal article" date="2007" name="J. Biol. Chem.">
        <title>Identification of histone H3 lysine 36 acetylation as a highly conserved histone modification.</title>
        <authorList>
            <person name="Morris S.A."/>
            <person name="Rao B."/>
            <person name="Garcia B.A."/>
            <person name="Hake S.B."/>
            <person name="Diaz R.L."/>
            <person name="Shabanowitz J."/>
            <person name="Hunt D.F."/>
            <person name="Allis C.D."/>
            <person name="Lieb J.D."/>
            <person name="Strahl B.D."/>
        </authorList>
    </citation>
    <scope>PROTEIN SEQUENCE OF 28-41</scope>
    <scope>ACETYLATION AT LYS-37</scope>
</reference>
<reference key="10">
    <citation type="journal article" date="2005" name="Mol. Cell. Biol.">
        <title>Insights into the role of histone H3 and histone H4 core modifiable residues in Saccharomyces cerevisiae.</title>
        <authorList>
            <person name="Hyland E.M."/>
            <person name="Cosgrove M.S."/>
            <person name="Molina H."/>
            <person name="Wang D."/>
            <person name="Pandey A."/>
            <person name="Cottee R.J."/>
            <person name="Boeke J.D."/>
        </authorList>
    </citation>
    <scope>PROTEIN SEQUENCE OF 55-64</scope>
    <scope>ACETYLATION AT LYS-57</scope>
    <scope>MUTAGENESIS OF ARG-53; LYS-57; LYS-80 AND THR-119</scope>
</reference>
<reference key="11">
    <citation type="journal article" date="1997" name="Proc. Natl. Acad. Sci. U.S.A.">
        <title>Histones H3 and H4 are components of upstream activation factor required for the high-level transcription of yeast rDNA by RNA polymerase I.</title>
        <authorList>
            <person name="Keener J."/>
            <person name="Dodd J.A."/>
            <person name="Lalo D."/>
            <person name="Nomura M."/>
        </authorList>
    </citation>
    <scope>IDENTIFICATION IN THE UAF COMPLEX</scope>
</reference>
<reference key="12">
    <citation type="journal article" date="1998" name="EMBO J.">
        <title>Essential and redundant functions of histone acetylation revealed by mutation of target lysines and loss of the Gcn5p acetyltransferase.</title>
        <authorList>
            <person name="Zhang W."/>
            <person name="Bone J.R."/>
            <person name="Edmondson D.G."/>
            <person name="Turner B.M."/>
            <person name="Roth S.Y."/>
        </authorList>
    </citation>
    <scope>ACETYLATION AT LYS-10; LYS-15 AND LYS-19</scope>
</reference>
<reference key="13">
    <citation type="journal article" date="1999" name="Mol. Cell. Biol.">
        <title>Esa1p is an essential histone acetyltransferase required for cell cycle progression.</title>
        <authorList>
            <person name="Clarke A.S."/>
            <person name="Lowell J.E."/>
            <person name="Jacobson S.J."/>
            <person name="Pillus L."/>
        </authorList>
    </citation>
    <scope>ACETYLATION AT LYS-15</scope>
</reference>
<reference key="14">
    <citation type="journal article" date="2000" name="Cell">
        <title>Mitotic phosphorylation of histone H3 is governed by Ipl1/aurora kinase and Glc7/PP1 phosphatase in budding yeast and nematodes.</title>
        <authorList>
            <person name="Hsu J.-Y."/>
            <person name="Sun Z.-W."/>
            <person name="Li X."/>
            <person name="Reuben M."/>
            <person name="Tatchell K."/>
            <person name="Bishop D.K."/>
            <person name="Grushcow J.M."/>
            <person name="Brame C.J."/>
            <person name="Caldwell J.A."/>
            <person name="Hunt D.F."/>
            <person name="Lin R."/>
            <person name="Smith M.M."/>
            <person name="Allis C.D."/>
        </authorList>
    </citation>
    <scope>PHOSPHORYLATION AT SER-11 BY IPL1</scope>
    <scope>DEPHOSPHORYLATION BY GLC7</scope>
    <scope>MUTAGENESIS OF SER-11</scope>
</reference>
<reference key="15">
    <citation type="journal article" date="2000" name="J. Biol. Chem.">
        <title>Steady-state levels of histone acetylation in Saccharomyces cerevisiae.</title>
        <authorList>
            <person name="Waterborg J.H."/>
        </authorList>
    </citation>
    <scope>ACETYLATION</scope>
</reference>
<reference key="16">
    <citation type="journal article" date="2000" name="Mol. Cell">
        <title>Phosphorylation of serine 10 in histone H3 is functionally linked in vitro and in vivo to Gcn5-mediated acetylation at lysine 14.</title>
        <authorList>
            <person name="Lo W.-S."/>
            <person name="Trievel R.C."/>
            <person name="Rojas J.R."/>
            <person name="Duggan L."/>
            <person name="Hsu J.-Y."/>
            <person name="Allis C.D."/>
            <person name="Marmorstein R."/>
            <person name="Berger S.L."/>
        </authorList>
    </citation>
    <scope>PHOSPHORYLATION AT SER-11</scope>
    <scope>ACETYLATION AT LYS-15</scope>
    <scope>MUTAGENESIS OF SER-11</scope>
</reference>
<reference key="17">
    <citation type="journal article" date="2001" name="EMBO J.">
        <title>The Saccharomyces cerevisiae Set1 complex includes an Ash2 homologue and methylates histone 3 lysine 4.</title>
        <authorList>
            <person name="Roguev A."/>
            <person name="Schaft D."/>
            <person name="Shevchenko A."/>
            <person name="Pijnappel W.W.M.P."/>
            <person name="Wilm M."/>
            <person name="Aasland R."/>
            <person name="Stewart A.F."/>
        </authorList>
    </citation>
    <scope>METHYLATION AT LYS-5</scope>
</reference>
<reference key="18">
    <citation type="journal article" date="2001" name="Genes Dev.">
        <title>Histone H3 lysine 4 methylation is mediated by Set1 and required for cell growth and rDNA silencing in Saccharomyces cerevisiae.</title>
        <authorList>
            <person name="Briggs S.D."/>
            <person name="Bryk M."/>
            <person name="Strahl B.D."/>
            <person name="Cheung W.L."/>
            <person name="Davie J.K."/>
            <person name="Dent S.Y.R."/>
            <person name="Winston F."/>
            <person name="Allis C.D."/>
        </authorList>
    </citation>
    <scope>METHYLATION AT LYS-5</scope>
</reference>
<reference key="19">
    <citation type="journal article" date="2001" name="Mol. Cell">
        <title>Highly specific antibodies determine histone acetylation site usage in yeast heterochromatin and euchromatin.</title>
        <authorList>
            <person name="Suka N."/>
            <person name="Suka Y."/>
            <person name="Carmen A.A."/>
            <person name="Wu J."/>
            <person name="Grunstein M."/>
        </authorList>
    </citation>
    <scope>ACETYLATION AT LYS-10; LYS-15; LYS-19; LYS-24 AND LYS-28</scope>
</reference>
<reference key="20">
    <citation type="journal article" date="2002" name="Genes Dev.">
        <title>Lysine methylation within the globular domain of histone H3 by Dot1 is important for telomeric silencing and Sir protein association.</title>
        <authorList>
            <person name="Ng H.H."/>
            <person name="Feng Q."/>
            <person name="Wang H."/>
            <person name="Erdjument-Bromage H."/>
            <person name="Tempst P."/>
            <person name="Zhang Y."/>
            <person name="Struhl K."/>
        </authorList>
    </citation>
    <scope>METHYLATION AT LYS-80</scope>
    <scope>MUTAGENESIS OF LYS-80</scope>
</reference>
<reference key="21">
    <citation type="journal article" date="2002" name="J. Biol. Chem.">
        <title>Disruptor of telomeric silencing-1 is a chromatin-specific histone H3 methyltransferase.</title>
        <authorList>
            <person name="Lacoste N."/>
            <person name="Utley R.T."/>
            <person name="Hunter J.M."/>
            <person name="Poirier G.G."/>
            <person name="Cote J."/>
        </authorList>
    </citation>
    <scope>METHYLATION AT LYS-80</scope>
</reference>
<reference key="22">
    <citation type="journal article" date="2002" name="Mol. Cell. Biol.">
        <title>Set2 is a nucleosomal histone H3-selective methyltransferase that mediates transcriptional repression.</title>
        <authorList>
            <person name="Strahl B.D."/>
            <person name="Grant P.A."/>
            <person name="Briggs S.D."/>
            <person name="Sun Z.-W."/>
            <person name="Bone J.R."/>
            <person name="Caldwell J.A."/>
            <person name="Mollah S."/>
            <person name="Cook R.G."/>
            <person name="Shabanowitz J."/>
            <person name="Hunt D.F."/>
            <person name="Allis C.D."/>
        </authorList>
    </citation>
    <scope>METHYLATION AT LYS-37</scope>
</reference>
<reference key="23">
    <citation type="journal article" date="2002" name="Nature">
        <title>Gene silencing: trans-histone regulatory pathway in chromatin.</title>
        <authorList>
            <person name="Briggs S.D."/>
            <person name="Xiao T."/>
            <person name="Sun Z.-W."/>
            <person name="Caldwell J.A."/>
            <person name="Shabanowitz J."/>
            <person name="Hunt D.F."/>
            <person name="Allis C.D."/>
            <person name="Strahl B.D."/>
        </authorList>
    </citation>
    <scope>METHYLATION AT LYS-5; LYS-37 AND LYS-80</scope>
</reference>
<reference key="24">
    <citation type="journal article" date="2002" name="Nature">
        <title>Active genes are tri-methylated at K4 of histone H3.</title>
        <authorList>
            <person name="Santos-Rosa H."/>
            <person name="Schneider R."/>
            <person name="Bannister A.J."/>
            <person name="Sherriff J."/>
            <person name="Bernstein B.E."/>
            <person name="Emre N.C.T."/>
            <person name="Schreiber S.L."/>
            <person name="Mellor J."/>
            <person name="Kouzarides T."/>
        </authorList>
    </citation>
    <scope>METHYLATION AT LYS-5</scope>
</reference>
<reference key="25">
    <citation type="journal article" date="2002" name="Proc. Natl. Acad. Sci. U.S.A.">
        <title>A trithorax-group complex purified from Saccharomyces cerevisiae is required for methylation of histone H3.</title>
        <authorList>
            <person name="Nagy P.L."/>
            <person name="Griesenbeck J."/>
            <person name="Kornberg R.D."/>
            <person name="Cleary M.L."/>
        </authorList>
    </citation>
    <scope>METHYLATION AT LYS-5</scope>
</reference>
<reference key="26">
    <citation type="journal article" date="2003" name="Genes Dev.">
        <title>Phosphorylation of RNA polymerase II CTD regulates H3 methylation in yeast.</title>
        <authorList>
            <person name="Xiao T."/>
            <person name="Hall H."/>
            <person name="Kizer K.O."/>
            <person name="Shibata Y."/>
            <person name="Hall M.C."/>
            <person name="Borchers C.H."/>
            <person name="Strahl B.D."/>
        </authorList>
    </citation>
    <scope>METHYLATION AT LYS-37</scope>
</reference>
<reference key="27">
    <citation type="journal article" date="2003" name="Mol. Cell. Biol.">
        <title>Methylation of histone H3 by Set2 in Saccharomyces cerevisiae is linked to transcriptional elongation by RNA polymerase II.</title>
        <authorList>
            <person name="Krogan N.J."/>
            <person name="Kim M."/>
            <person name="Tong A."/>
            <person name="Golshani A."/>
            <person name="Cagney G."/>
            <person name="Canadien V."/>
            <person name="Richards D.P."/>
            <person name="Beattie B.K."/>
            <person name="Emili A."/>
            <person name="Boone C."/>
            <person name="Shilatifard A."/>
            <person name="Buratowski S."/>
            <person name="Greenblatt J."/>
        </authorList>
    </citation>
    <scope>METHYLATION AT LYS-37</scope>
</reference>
<reference key="28">
    <citation type="journal article" date="2003" name="Mol. Cell. Biol.">
        <title>Set2-catalyzed methylation of histone H3 represses basal expression of GAL4 in Saccharomyces cerevisiae.</title>
        <authorList>
            <person name="Landry J."/>
            <person name="Sutton A."/>
            <person name="Hesman T."/>
            <person name="Min J."/>
            <person name="Xu R.-M."/>
            <person name="Johnston M."/>
            <person name="Sternglanz R."/>
        </authorList>
    </citation>
    <scope>METHYLATION AT LYS-37</scope>
</reference>
<reference key="29">
    <citation type="journal article" date="2003" name="Nature">
        <title>Global analysis of protein expression in yeast.</title>
        <authorList>
            <person name="Ghaemmaghami S."/>
            <person name="Huh W.-K."/>
            <person name="Bower K."/>
            <person name="Howson R.W."/>
            <person name="Belle A."/>
            <person name="Dephoure N."/>
            <person name="O'Shea E.K."/>
            <person name="Weissman J.S."/>
        </authorList>
    </citation>
    <scope>LEVEL OF PROTEIN EXPRESSION [LARGE SCALE ANALYSIS]</scope>
</reference>
<reference key="30">
    <citation type="journal article" date="2003" name="Proc. Natl. Acad. Sci. U.S.A.">
        <title>Lysine-79 of histone H3 is hypomethylated at silenced loci in yeast and mammalian cells: a potential mechanism for position-effect variegation.</title>
        <authorList>
            <person name="Ng H.H."/>
            <person name="Ciccone D.N."/>
            <person name="Morshead K.B."/>
            <person name="Oettinger M.A."/>
            <person name="Struhl K."/>
        </authorList>
    </citation>
    <scope>METHYLATION AT LYS-80</scope>
</reference>
<reference key="31">
    <citation type="journal article" date="2003" name="Yeast">
        <title>Saccharomyces cerevisiae Set1p is a methyltransferase specific for lysine 4 of histone H3 and is required for efficient gene expression.</title>
        <authorList>
            <person name="Boa S."/>
            <person name="Coert C."/>
            <person name="Patterton H.-G."/>
        </authorList>
    </citation>
    <scope>METHYLATION AT LYS-5</scope>
    <scope>IDENTIFICATION BY MASS SPECTROMETRY</scope>
</reference>
<reference key="32">
    <citation type="journal article" date="2005" name="EMBO J.">
        <title>Histone H3 phosphorylation can promote TBP recruitment through distinct promoter-specific mechanisms.</title>
        <authorList>
            <person name="Lo W.-S."/>
            <person name="Gamache E.R."/>
            <person name="Henry K.W."/>
            <person name="Yang D."/>
            <person name="Pillus L."/>
            <person name="Berger S.L."/>
        </authorList>
    </citation>
    <scope>PHOSPHORYLATION AT SER-11</scope>
    <scope>ACETYLATION AT LYS-15</scope>
</reference>
<reference key="33">
    <citation type="journal article" date="2005" name="J. Biol. Chem.">
        <title>The DNA damage checkpoint response requires histone H2B ubiquitination by Rad6-Bre1 and H3 methylation by Dot1.</title>
        <authorList>
            <person name="Giannattasio M."/>
            <person name="Lazzaro F."/>
            <person name="Plevani P."/>
            <person name="Muzi-Falconi M."/>
        </authorList>
    </citation>
    <scope>METHYLATION AT LYS-80</scope>
</reference>
<reference key="34">
    <citation type="journal article" date="2005" name="J. Biol. Chem.">
        <title>Characterization of lysine 56 of histone H3 as an acetylation site in Saccharomyces cerevisiae.</title>
        <authorList>
            <person name="Ozdemir A."/>
            <person name="Spicuglia S."/>
            <person name="Lasonder E."/>
            <person name="Vermeulen M."/>
            <person name="Campsteijn C."/>
            <person name="Stunnenberg H.G."/>
            <person name="Logie C."/>
        </authorList>
    </citation>
    <scope>ACETYLATION AT LYS-57</scope>
    <scope>MUTAGENESIS OF LYS-57</scope>
</reference>
<reference key="35">
    <citation type="journal article" date="2005" name="J. Mol. Biol.">
        <title>Histone H3 lysine 4 mono-methylation does not require ubiquitination of histone H2B.</title>
        <authorList>
            <person name="Dehe P.-M."/>
            <person name="Pamblanco M."/>
            <person name="Luciano P."/>
            <person name="Lebrun R."/>
            <person name="Moinier D."/>
            <person name="Sendra R."/>
            <person name="Verreault A."/>
            <person name="Tordera V."/>
            <person name="Geli V."/>
        </authorList>
    </citation>
    <scope>METHYLATION AT LYS-5</scope>
</reference>
<reference key="36">
    <citation type="journal article" date="2005" name="Mol. Cell">
        <title>Dynamic lysine methylation on histone H3 defines the regulatory phase of gene transcription.</title>
        <authorList>
            <person name="Morillon A."/>
            <person name="Karabetsou N."/>
            <person name="Nair A."/>
            <person name="Mellor J."/>
        </authorList>
    </citation>
    <scope>METHYLATION AT LYS-5</scope>
</reference>
<reference key="37">
    <citation type="journal article" date="2005" name="Mol. Cell">
        <title>Molecular regulation of histone H3 trimethylation by COMPASS and the regulation of gene expression.</title>
        <authorList>
            <person name="Schneider J."/>
            <person name="Wood A."/>
            <person name="Lee J.-S."/>
            <person name="Schuster R."/>
            <person name="Dueker J."/>
            <person name="Maguire C."/>
            <person name="Swanson S.K."/>
            <person name="Florens L."/>
            <person name="Washburn M.P."/>
            <person name="Shilatifard A."/>
        </authorList>
    </citation>
    <scope>METHYLATION AT LYS-5</scope>
</reference>
<reference key="38">
    <citation type="journal article" date="2005" name="Mol. Cell. Biol.">
        <title>A novel domain in Set2 mediates RNA polymerase II interaction and couples histone H3 K36 methylation with transcript elongation.</title>
        <authorList>
            <person name="Kizer K.O."/>
            <person name="Phatnani H.P."/>
            <person name="Shibata Y."/>
            <person name="Hall H."/>
            <person name="Greenleaf A.L."/>
            <person name="Strahl B.D."/>
        </authorList>
    </citation>
    <scope>METHYLATION AT LYS-37</scope>
</reference>
<reference key="39">
    <citation type="journal article" date="2005" name="Nature">
        <title>A role for cell-cycle-regulated histone H3 lysine 56 acetylation in the DNA damage response.</title>
        <authorList>
            <person name="Masumoto H."/>
            <person name="Hawke D."/>
            <person name="Kobayashi R."/>
            <person name="Verreault A."/>
        </authorList>
    </citation>
    <scope>ACETYLATION AT LYS-57</scope>
    <scope>MUTAGENESIS OF LYS-57</scope>
    <scope>IDENTIFICATION BY MASS SPECTROMETRY</scope>
</reference>
<reference key="40">
    <citation type="journal article" date="2005" name="PLoS Biol.">
        <title>Single-nucleosome mapping of histone modifications in S. cerevisiae.</title>
        <authorList>
            <person name="Liu C.L."/>
            <person name="Kaplan T."/>
            <person name="Kim M."/>
            <person name="Buratowski S."/>
            <person name="Schreiber S.L."/>
            <person name="Friedman N."/>
            <person name="Rando O.J."/>
        </authorList>
    </citation>
    <scope>METHYLATION AT LYS-5</scope>
    <scope>ACETYLATION AT LYS-10; LYS-15 AND LYS-19</scope>
</reference>
<reference key="41">
    <citation type="journal article" date="2007" name="J. Biol. Chem.">
        <title>Organismal differences in post-translational modifications in histones H3 and H4.</title>
        <authorList>
            <person name="Garcia B.A."/>
            <person name="Hake S.B."/>
            <person name="Diaz R.L."/>
            <person name="Kauer M."/>
            <person name="Morris S.A."/>
            <person name="Recht J."/>
            <person name="Shabanowitz J."/>
            <person name="Mishra N."/>
            <person name="Strahl B.D."/>
            <person name="Allis C.D."/>
            <person name="Hunt D.F."/>
        </authorList>
    </citation>
    <scope>ACETYLATION AT LYS-10; LYS-15; LYS-19; LYS-24; LYS-28; LYS-37; LYS-57 AND LYS-65</scope>
    <scope>METHYLATION AT LYS-5; LYS-10; LYS-15; LYS-19; LYS-24; LYS-28; LYS-37 AND LYS-80</scope>
    <scope>IDENTIFICATION BY MASS SPECTROMETRY</scope>
</reference>
<reference key="42">
    <citation type="journal article" date="2007" name="Mol. Cell">
        <title>Histone H3-K56 acetylation is catalyzed by histone chaperone-dependent complexes.</title>
        <authorList>
            <person name="Tsubota T."/>
            <person name="Berndsen C.E."/>
            <person name="Erkmann J.A."/>
            <person name="Smith C.L."/>
            <person name="Yang L."/>
            <person name="Freitas M.A."/>
            <person name="Denu J.M."/>
            <person name="Kaufman P.D."/>
        </authorList>
    </citation>
    <scope>ACETYLATION AT LYS-57</scope>
    <scope>IDENTIFICATION BY MASS SPECTROMETRY</scope>
</reference>
<reference key="43">
    <citation type="journal article" date="2009" name="J. Proteome Res.">
        <title>Identification and verification of lysine propionylation and butyrylation in yeast core histones using PTMap software.</title>
        <authorList>
            <person name="Zhang K."/>
            <person name="Chen Y."/>
            <person name="Zhang Z."/>
            <person name="Zhao Y."/>
        </authorList>
    </citation>
    <scope>ACETYLATION AT LYS-15; LYS-19; LYS-24; LYS-28; LYS-37; LYS-38 AND LYS-57</scope>
    <scope>PROPIONYLATION AT LYS-24 AND LYS-57</scope>
    <scope>BUTYRYLATION AT LYS-15 AND LYS-28</scope>
    <scope>METHYLATION AT LYS-37 AND LYS-38</scope>
</reference>
<reference key="44">
    <citation type="journal article" date="2012" name="Mol. Cell. Proteomics">
        <title>Lysine succinylation and lysine malonylation in histones.</title>
        <authorList>
            <person name="Xie Z."/>
            <person name="Dai J."/>
            <person name="Dai L."/>
            <person name="Tan M."/>
            <person name="Cheng Z."/>
            <person name="Wu Y."/>
            <person name="Boeke J.D."/>
            <person name="Zhao Y."/>
        </authorList>
    </citation>
    <scope>MALONYLATION AT LYS-57</scope>
    <scope>SUCCINYLATION AT LYS-80</scope>
</reference>
<reference key="45">
    <citation type="journal article" date="2016" name="Mol. Cell">
        <title>Dynamic competing histone H4 K5K8 acetylation and butyrylation are hallmarks of highly active gene promoters.</title>
        <authorList>
            <person name="Goudarzi A."/>
            <person name="Zhang D."/>
            <person name="Huang H."/>
            <person name="Barral S."/>
            <person name="Kwon O.K."/>
            <person name="Qi S."/>
            <person name="Tang Z."/>
            <person name="Buchou T."/>
            <person name="Vitte A.L."/>
            <person name="He T."/>
            <person name="Cheng Z."/>
            <person name="Montellier E."/>
            <person name="Gaucher J."/>
            <person name="Curtet S."/>
            <person name="Debernardi A."/>
            <person name="Charbonnier G."/>
            <person name="Puthier D."/>
            <person name="Petosa C."/>
            <person name="Panne D."/>
            <person name="Rousseaux S."/>
            <person name="Roeder R.G."/>
            <person name="Zhao Y."/>
            <person name="Khochbin S."/>
        </authorList>
    </citation>
    <scope>BUTYRYLATION AT LYS-15; LYS-19 AND LYS-24</scope>
</reference>
<reference key="46">
    <citation type="journal article" date="2016" name="Nat. Chem. Biol.">
        <title>The Taf14 YEATS domain is a reader of histone crotonylation.</title>
        <authorList>
            <person name="Andrews F.H."/>
            <person name="Shinsky S.A."/>
            <person name="Shanle E.K."/>
            <person name="Bridgers J.B."/>
            <person name="Gest A."/>
            <person name="Tsun I.K."/>
            <person name="Krajewski K."/>
            <person name="Shi X."/>
            <person name="Strahl B.D."/>
            <person name="Kutateladze T.G."/>
        </authorList>
    </citation>
    <scope>ACETYLATION AT LYS-10</scope>
    <scope>CROTONYLATION AT LYS-10</scope>
</reference>
<reference key="47">
    <citation type="journal article" date="2001" name="EMBO J.">
        <title>Structure of the yeast nucleosome core particle reveals fundamental changes in internucleosome interactions.</title>
        <authorList>
            <person name="White C.L."/>
            <person name="Suto R.K."/>
            <person name="Luger K."/>
        </authorList>
    </citation>
    <scope>X-RAY CRYSTALLOGRAPHY (3.1 ANGSTROMS) OF H3 IN NUCLEOSOME COMPLEX</scope>
</reference>
<protein>
    <recommendedName>
        <fullName>Histone H3</fullName>
    </recommendedName>
</protein>
<name>H3_YEAST</name>
<organism>
    <name type="scientific">Saccharomyces cerevisiae (strain ATCC 204508 / S288c)</name>
    <name type="common">Baker's yeast</name>
    <dbReference type="NCBI Taxonomy" id="559292"/>
    <lineage>
        <taxon>Eukaryota</taxon>
        <taxon>Fungi</taxon>
        <taxon>Dikarya</taxon>
        <taxon>Ascomycota</taxon>
        <taxon>Saccharomycotina</taxon>
        <taxon>Saccharomycetes</taxon>
        <taxon>Saccharomycetales</taxon>
        <taxon>Saccharomycetaceae</taxon>
        <taxon>Saccharomyces</taxon>
    </lineage>
</organism>
<proteinExistence type="evidence at protein level"/>
<keyword id="KW-0002">3D-structure</keyword>
<keyword id="KW-0007">Acetylation</keyword>
<keyword id="KW-0158">Chromosome</keyword>
<keyword id="KW-0903">Direct protein sequencing</keyword>
<keyword id="KW-0238">DNA-binding</keyword>
<keyword id="KW-0488">Methylation</keyword>
<keyword id="KW-0544">Nucleosome core</keyword>
<keyword id="KW-0539">Nucleus</keyword>
<keyword id="KW-0597">Phosphoprotein</keyword>
<keyword id="KW-1185">Reference proteome</keyword>